<name>ASNH_BACSU</name>
<reference key="1">
    <citation type="journal article" date="1995" name="DNA Res.">
        <title>Cloning and sequencing of a 36-kb region of the Bacillus subtilis genome between the gnt and iol operons.</title>
        <authorList>
            <person name="Yoshida K."/>
            <person name="Seki S."/>
            <person name="Fujimura M."/>
            <person name="Miwa Y."/>
            <person name="Fujita Y."/>
        </authorList>
    </citation>
    <scope>NUCLEOTIDE SEQUENCE [GENOMIC DNA]</scope>
    <source>
        <strain>168 / BGSC1A1</strain>
    </source>
</reference>
<reference key="2">
    <citation type="journal article" date="1997" name="Nature">
        <title>The complete genome sequence of the Gram-positive bacterium Bacillus subtilis.</title>
        <authorList>
            <person name="Kunst F."/>
            <person name="Ogasawara N."/>
            <person name="Moszer I."/>
            <person name="Albertini A.M."/>
            <person name="Alloni G."/>
            <person name="Azevedo V."/>
            <person name="Bertero M.G."/>
            <person name="Bessieres P."/>
            <person name="Bolotin A."/>
            <person name="Borchert S."/>
            <person name="Borriss R."/>
            <person name="Boursier L."/>
            <person name="Brans A."/>
            <person name="Braun M."/>
            <person name="Brignell S.C."/>
            <person name="Bron S."/>
            <person name="Brouillet S."/>
            <person name="Bruschi C.V."/>
            <person name="Caldwell B."/>
            <person name="Capuano V."/>
            <person name="Carter N.M."/>
            <person name="Choi S.-K."/>
            <person name="Codani J.-J."/>
            <person name="Connerton I.F."/>
            <person name="Cummings N.J."/>
            <person name="Daniel R.A."/>
            <person name="Denizot F."/>
            <person name="Devine K.M."/>
            <person name="Duesterhoeft A."/>
            <person name="Ehrlich S.D."/>
            <person name="Emmerson P.T."/>
            <person name="Entian K.-D."/>
            <person name="Errington J."/>
            <person name="Fabret C."/>
            <person name="Ferrari E."/>
            <person name="Foulger D."/>
            <person name="Fritz C."/>
            <person name="Fujita M."/>
            <person name="Fujita Y."/>
            <person name="Fuma S."/>
            <person name="Galizzi A."/>
            <person name="Galleron N."/>
            <person name="Ghim S.-Y."/>
            <person name="Glaser P."/>
            <person name="Goffeau A."/>
            <person name="Golightly E.J."/>
            <person name="Grandi G."/>
            <person name="Guiseppi G."/>
            <person name="Guy B.J."/>
            <person name="Haga K."/>
            <person name="Haiech J."/>
            <person name="Harwood C.R."/>
            <person name="Henaut A."/>
            <person name="Hilbert H."/>
            <person name="Holsappel S."/>
            <person name="Hosono S."/>
            <person name="Hullo M.-F."/>
            <person name="Itaya M."/>
            <person name="Jones L.-M."/>
            <person name="Joris B."/>
            <person name="Karamata D."/>
            <person name="Kasahara Y."/>
            <person name="Klaerr-Blanchard M."/>
            <person name="Klein C."/>
            <person name="Kobayashi Y."/>
            <person name="Koetter P."/>
            <person name="Koningstein G."/>
            <person name="Krogh S."/>
            <person name="Kumano M."/>
            <person name="Kurita K."/>
            <person name="Lapidus A."/>
            <person name="Lardinois S."/>
            <person name="Lauber J."/>
            <person name="Lazarevic V."/>
            <person name="Lee S.-M."/>
            <person name="Levine A."/>
            <person name="Liu H."/>
            <person name="Masuda S."/>
            <person name="Mauel C."/>
            <person name="Medigue C."/>
            <person name="Medina N."/>
            <person name="Mellado R.P."/>
            <person name="Mizuno M."/>
            <person name="Moestl D."/>
            <person name="Nakai S."/>
            <person name="Noback M."/>
            <person name="Noone D."/>
            <person name="O'Reilly M."/>
            <person name="Ogawa K."/>
            <person name="Ogiwara A."/>
            <person name="Oudega B."/>
            <person name="Park S.-H."/>
            <person name="Parro V."/>
            <person name="Pohl T.M."/>
            <person name="Portetelle D."/>
            <person name="Porwollik S."/>
            <person name="Prescott A.M."/>
            <person name="Presecan E."/>
            <person name="Pujic P."/>
            <person name="Purnelle B."/>
            <person name="Rapoport G."/>
            <person name="Rey M."/>
            <person name="Reynolds S."/>
            <person name="Rieger M."/>
            <person name="Rivolta C."/>
            <person name="Rocha E."/>
            <person name="Roche B."/>
            <person name="Rose M."/>
            <person name="Sadaie Y."/>
            <person name="Sato T."/>
            <person name="Scanlan E."/>
            <person name="Schleich S."/>
            <person name="Schroeter R."/>
            <person name="Scoffone F."/>
            <person name="Sekiguchi J."/>
            <person name="Sekowska A."/>
            <person name="Seror S.J."/>
            <person name="Serror P."/>
            <person name="Shin B.-S."/>
            <person name="Soldo B."/>
            <person name="Sorokin A."/>
            <person name="Tacconi E."/>
            <person name="Takagi T."/>
            <person name="Takahashi H."/>
            <person name="Takemaru K."/>
            <person name="Takeuchi M."/>
            <person name="Tamakoshi A."/>
            <person name="Tanaka T."/>
            <person name="Terpstra P."/>
            <person name="Tognoni A."/>
            <person name="Tosato V."/>
            <person name="Uchiyama S."/>
            <person name="Vandenbol M."/>
            <person name="Vannier F."/>
            <person name="Vassarotti A."/>
            <person name="Viari A."/>
            <person name="Wambutt R."/>
            <person name="Wedler E."/>
            <person name="Wedler H."/>
            <person name="Weitzenegger T."/>
            <person name="Winters P."/>
            <person name="Wipat A."/>
            <person name="Yamamoto H."/>
            <person name="Yamane K."/>
            <person name="Yasumoto K."/>
            <person name="Yata K."/>
            <person name="Yoshida K."/>
            <person name="Yoshikawa H.-F."/>
            <person name="Zumstein E."/>
            <person name="Yoshikawa H."/>
            <person name="Danchin A."/>
        </authorList>
    </citation>
    <scope>NUCLEOTIDE SEQUENCE [LARGE SCALE GENOMIC DNA]</scope>
    <source>
        <strain>168</strain>
    </source>
</reference>
<reference key="3">
    <citation type="journal article" date="2009" name="Microbiology">
        <title>From a consortium sequence to a unified sequence: the Bacillus subtilis 168 reference genome a decade later.</title>
        <authorList>
            <person name="Barbe V."/>
            <person name="Cruveiller S."/>
            <person name="Kunst F."/>
            <person name="Lenoble P."/>
            <person name="Meurice G."/>
            <person name="Sekowska A."/>
            <person name="Vallenet D."/>
            <person name="Wang T."/>
            <person name="Moszer I."/>
            <person name="Medigue C."/>
            <person name="Danchin A."/>
        </authorList>
    </citation>
    <scope>SEQUENCE REVISION TO 185</scope>
</reference>
<reference key="4">
    <citation type="journal article" date="1999" name="J. Bacteriol.">
        <title>Three asparagine synthetase genes of Bacillus subtilis.</title>
        <authorList>
            <person name="Yoshida K."/>
            <person name="Fujita Y."/>
            <person name="Ehrlich S.D."/>
        </authorList>
    </citation>
    <scope>CHARACTERIZATION</scope>
</reference>
<organism>
    <name type="scientific">Bacillus subtilis (strain 168)</name>
    <dbReference type="NCBI Taxonomy" id="224308"/>
    <lineage>
        <taxon>Bacteria</taxon>
        <taxon>Bacillati</taxon>
        <taxon>Bacillota</taxon>
        <taxon>Bacilli</taxon>
        <taxon>Bacillales</taxon>
        <taxon>Bacillaceae</taxon>
        <taxon>Bacillus</taxon>
    </lineage>
</organism>
<accession>P42113</accession>
<feature type="initiator methionine" description="Removed" evidence="1">
    <location>
        <position position="1"/>
    </location>
</feature>
<feature type="chain" id="PRO_0000056933" description="Asparagine synthetase [glutamine-hydrolyzing] 2">
    <location>
        <begin position="2"/>
        <end position="747"/>
    </location>
</feature>
<feature type="domain" description="Glutamine amidotransferase type-2" evidence="2">
    <location>
        <begin position="2"/>
        <end position="218"/>
    </location>
</feature>
<feature type="active site" description="For GATase activity" evidence="1">
    <location>
        <position position="2"/>
    </location>
</feature>
<feature type="binding site" evidence="1">
    <location>
        <begin position="52"/>
        <end position="56"/>
    </location>
    <ligand>
        <name>L-glutamine</name>
        <dbReference type="ChEBI" id="CHEBI:58359"/>
    </ligand>
</feature>
<feature type="binding site" evidence="1">
    <location>
        <begin position="77"/>
        <end position="79"/>
    </location>
    <ligand>
        <name>L-glutamine</name>
        <dbReference type="ChEBI" id="CHEBI:58359"/>
    </ligand>
</feature>
<feature type="binding site" evidence="1">
    <location>
        <position position="100"/>
    </location>
    <ligand>
        <name>L-glutamine</name>
        <dbReference type="ChEBI" id="CHEBI:58359"/>
    </ligand>
</feature>
<feature type="binding site" evidence="1">
    <location>
        <begin position="395"/>
        <end position="396"/>
    </location>
    <ligand>
        <name>ATP</name>
        <dbReference type="ChEBI" id="CHEBI:30616"/>
    </ligand>
</feature>
<feature type="sequence conflict" description="In Ref. 1; BAA21593." evidence="3" ref="1">
    <original>W</original>
    <variation>C</variation>
    <location>
        <position position="185"/>
    </location>
</feature>
<sequence length="747" mass="85932">MCGLAGIINLAAPRSQECTFHILKGMADAISYRGPDDEQYHIDSKVGFAFRRLSILDLVNGQQPFLNEDGSIVVMVNGEIYNYKELKASLHNHMFKTTSDCEVIVHLYEEKGIGFVDDIIGMFSIAIWDKNKNKVFLVRDRFGIKPLFYTELKHELIFASEIKSLFSHPHCPRQFNWKEALSDIWLSGEAASNHKETTSFFVNIQNLDAGHYLEINLTTNERKTASYWSLQDILLRQGYRENLHPDDLIEGYRELLADSVHRCLQSDVEVGLFLSGGIDSAAVAHFAAEKQDLHTFTVLSQSTFTNEDAKYAHWLAKDLHLPNHQVLYQLGNDELLQPESYKHLLWICETPFCGPEQLYKFHLHKYAKAIRPNLKVMLTGQGSDEFNGGYSTTLSPAENPSWEGFIESVNTMEMNRLHRLQGNIFRVWEEHFGLSPINLSYLKSNDSSQADPWQSYVLTKYRDLQMYNCWHEDRIAAANHIENRVPFLDHRLVEWVCGIPDGLRKDLLWDKSVLRKSLTNELHTSYTHRPKVPFFYGKDVRYTHKMMFHLLKKNNYQLIEEAFSHSDASSIIQVEHIHAIMTYLEDDPEFTNFEFLLRLVNMGLLSKMTKETPSVQLDITSHLESITIKDWHSQEGDIASRLNISANKCEGQDILALNPGVTLLRPESDSEHCIYIAEEGFIQFIVSEEDVGAWLHILCDINGKDTLHTILDRHGVSLEEVAKYIQEAIEHNIILIKQKNLPEGAYR</sequence>
<comment type="catalytic activity">
    <reaction>
        <text>L-aspartate + L-glutamine + ATP + H2O = L-asparagine + L-glutamate + AMP + diphosphate + H(+)</text>
        <dbReference type="Rhea" id="RHEA:12228"/>
        <dbReference type="ChEBI" id="CHEBI:15377"/>
        <dbReference type="ChEBI" id="CHEBI:15378"/>
        <dbReference type="ChEBI" id="CHEBI:29985"/>
        <dbReference type="ChEBI" id="CHEBI:29991"/>
        <dbReference type="ChEBI" id="CHEBI:30616"/>
        <dbReference type="ChEBI" id="CHEBI:33019"/>
        <dbReference type="ChEBI" id="CHEBI:58048"/>
        <dbReference type="ChEBI" id="CHEBI:58359"/>
        <dbReference type="ChEBI" id="CHEBI:456215"/>
        <dbReference type="EC" id="6.3.5.4"/>
    </reaction>
</comment>
<comment type="pathway">
    <text>Amino-acid biosynthesis; L-asparagine biosynthesis; L-asparagine from L-aspartate (L-Gln route): step 1/1.</text>
</comment>
<comment type="similarity">
    <text evidence="3">Belongs to the asparagine synthetase family.</text>
</comment>
<protein>
    <recommendedName>
        <fullName>Asparagine synthetase [glutamine-hydrolyzing] 2</fullName>
        <ecNumber>6.3.5.4</ecNumber>
    </recommendedName>
</protein>
<keyword id="KW-0028">Amino-acid biosynthesis</keyword>
<keyword id="KW-0061">Asparagine biosynthesis</keyword>
<keyword id="KW-0067">ATP-binding</keyword>
<keyword id="KW-0315">Glutamine amidotransferase</keyword>
<keyword id="KW-0436">Ligase</keyword>
<keyword id="KW-0547">Nucleotide-binding</keyword>
<keyword id="KW-1185">Reference proteome</keyword>
<evidence type="ECO:0000250" key="1"/>
<evidence type="ECO:0000255" key="2">
    <source>
        <dbReference type="PROSITE-ProRule" id="PRU00609"/>
    </source>
</evidence>
<evidence type="ECO:0000305" key="3"/>
<gene>
    <name type="primary">asnH</name>
    <name type="synonym">yxaN</name>
    <name type="ordered locus">BSU39920</name>
    <name type="ORF">S14NR</name>
    <name type="ORF">VE7AR</name>
</gene>
<dbReference type="EC" id="6.3.5.4"/>
<dbReference type="EMBL" id="AB005554">
    <property type="protein sequence ID" value="BAA21593.1"/>
    <property type="molecule type" value="Genomic_DNA"/>
</dbReference>
<dbReference type="EMBL" id="AL009126">
    <property type="protein sequence ID" value="CAB16028.2"/>
    <property type="molecule type" value="Genomic_DNA"/>
</dbReference>
<dbReference type="PIR" id="A69591">
    <property type="entry name" value="A69591"/>
</dbReference>
<dbReference type="RefSeq" id="NP_391871.2">
    <property type="nucleotide sequence ID" value="NC_000964.3"/>
</dbReference>
<dbReference type="SMR" id="P42113"/>
<dbReference type="FunCoup" id="P42113">
    <property type="interactions" value="167"/>
</dbReference>
<dbReference type="STRING" id="224308.BSU39920"/>
<dbReference type="PaxDb" id="224308-BSU39920"/>
<dbReference type="EnsemblBacteria" id="CAB16028">
    <property type="protein sequence ID" value="CAB16028"/>
    <property type="gene ID" value="BSU_39920"/>
</dbReference>
<dbReference type="GeneID" id="937677"/>
<dbReference type="KEGG" id="bsu:BSU39920"/>
<dbReference type="PATRIC" id="fig|224308.179.peg.4318"/>
<dbReference type="eggNOG" id="COG0367">
    <property type="taxonomic scope" value="Bacteria"/>
</dbReference>
<dbReference type="InParanoid" id="P42113"/>
<dbReference type="OrthoDB" id="9763290at2"/>
<dbReference type="PhylomeDB" id="P42113"/>
<dbReference type="BioCyc" id="BSUB:BSU39920-MONOMER"/>
<dbReference type="UniPathway" id="UPA00134">
    <property type="reaction ID" value="UER00195"/>
</dbReference>
<dbReference type="Proteomes" id="UP000001570">
    <property type="component" value="Chromosome"/>
</dbReference>
<dbReference type="GO" id="GO:0004066">
    <property type="term" value="F:asparagine synthase (glutamine-hydrolyzing) activity"/>
    <property type="evidence" value="ECO:0007669"/>
    <property type="project" value="UniProtKB-EC"/>
</dbReference>
<dbReference type="GO" id="GO:0005524">
    <property type="term" value="F:ATP binding"/>
    <property type="evidence" value="ECO:0007669"/>
    <property type="project" value="UniProtKB-KW"/>
</dbReference>
<dbReference type="GO" id="GO:0070981">
    <property type="term" value="P:L-asparagine biosynthetic process"/>
    <property type="evidence" value="ECO:0007669"/>
    <property type="project" value="UniProtKB-UniPathway"/>
</dbReference>
<dbReference type="CDD" id="cd01991">
    <property type="entry name" value="Asn_synthase_B_C"/>
    <property type="match status" value="1"/>
</dbReference>
<dbReference type="CDD" id="cd00712">
    <property type="entry name" value="AsnB"/>
    <property type="match status" value="1"/>
</dbReference>
<dbReference type="Gene3D" id="3.60.20.10">
    <property type="entry name" value="Glutamine Phosphoribosylpyrophosphate, subunit 1, domain 1"/>
    <property type="match status" value="1"/>
</dbReference>
<dbReference type="Gene3D" id="3.40.50.620">
    <property type="entry name" value="HUPs"/>
    <property type="match status" value="1"/>
</dbReference>
<dbReference type="InterPro" id="IPR006426">
    <property type="entry name" value="Asn_synth_AEB"/>
</dbReference>
<dbReference type="InterPro" id="IPR001962">
    <property type="entry name" value="Asn_synthase"/>
</dbReference>
<dbReference type="InterPro" id="IPR051786">
    <property type="entry name" value="ASN_synthetase/amidase"/>
</dbReference>
<dbReference type="InterPro" id="IPR033738">
    <property type="entry name" value="AsnB_N"/>
</dbReference>
<dbReference type="InterPro" id="IPR017932">
    <property type="entry name" value="GATase_2_dom"/>
</dbReference>
<dbReference type="InterPro" id="IPR029055">
    <property type="entry name" value="Ntn_hydrolases_N"/>
</dbReference>
<dbReference type="InterPro" id="IPR014729">
    <property type="entry name" value="Rossmann-like_a/b/a_fold"/>
</dbReference>
<dbReference type="NCBIfam" id="TIGR01536">
    <property type="entry name" value="asn_synth_AEB"/>
    <property type="match status" value="1"/>
</dbReference>
<dbReference type="PANTHER" id="PTHR43284:SF1">
    <property type="entry name" value="ASPARAGINE SYNTHETASE"/>
    <property type="match status" value="1"/>
</dbReference>
<dbReference type="PANTHER" id="PTHR43284">
    <property type="entry name" value="ASPARAGINE SYNTHETASE (GLUTAMINE-HYDROLYZING)"/>
    <property type="match status" value="1"/>
</dbReference>
<dbReference type="Pfam" id="PF00733">
    <property type="entry name" value="Asn_synthase"/>
    <property type="match status" value="1"/>
</dbReference>
<dbReference type="Pfam" id="PF13537">
    <property type="entry name" value="GATase_7"/>
    <property type="match status" value="1"/>
</dbReference>
<dbReference type="SUPFAM" id="SSF52402">
    <property type="entry name" value="Adenine nucleotide alpha hydrolases-like"/>
    <property type="match status" value="1"/>
</dbReference>
<dbReference type="SUPFAM" id="SSF56235">
    <property type="entry name" value="N-terminal nucleophile aminohydrolases (Ntn hydrolases)"/>
    <property type="match status" value="1"/>
</dbReference>
<dbReference type="PROSITE" id="PS51278">
    <property type="entry name" value="GATASE_TYPE_2"/>
    <property type="match status" value="1"/>
</dbReference>
<proteinExistence type="evidence at protein level"/>